<feature type="signal peptide" evidence="2">
    <location>
        <begin position="1"/>
        <end position="21"/>
    </location>
</feature>
<feature type="chain" id="PRO_0000017416" description="Chondrolectin">
    <location>
        <begin position="22"/>
        <end position="273"/>
    </location>
</feature>
<feature type="topological domain" description="Extracellular" evidence="2">
    <location>
        <begin position="22"/>
        <end position="216"/>
    </location>
</feature>
<feature type="transmembrane region" description="Helical" evidence="2">
    <location>
        <begin position="217"/>
        <end position="237"/>
    </location>
</feature>
<feature type="topological domain" description="Cytoplasmic" evidence="2">
    <location>
        <begin position="238"/>
        <end position="273"/>
    </location>
</feature>
<feature type="domain" description="C-type lectin" evidence="3">
    <location>
        <begin position="35"/>
        <end position="179"/>
    </location>
</feature>
<feature type="region of interest" description="Disordered" evidence="4">
    <location>
        <begin position="247"/>
        <end position="273"/>
    </location>
</feature>
<feature type="compositionally biased region" description="Polar residues" evidence="4">
    <location>
        <begin position="251"/>
        <end position="263"/>
    </location>
</feature>
<feature type="glycosylation site" description="N-linked (GlcNAc...) asparagine" evidence="2">
    <location>
        <position position="86"/>
    </location>
</feature>
<feature type="disulfide bond" evidence="3">
    <location>
        <begin position="61"/>
        <end position="178"/>
    </location>
</feature>
<feature type="disulfide bond" evidence="3">
    <location>
        <begin position="144"/>
        <end position="170"/>
    </location>
</feature>
<feature type="splice variant" id="VSP_058918" description="In isoform 2." evidence="9 10">
    <original>SKGRSKTSPNQSTLWISKSTRKESGMEV</original>
    <variation>RKARRHFIKDSTPLSSECLAESLNSNLVHMAGSLIPYHFQNNSPSLN</variation>
    <location>
        <begin position="246"/>
        <end position="273"/>
    </location>
</feature>
<feature type="sequence conflict" description="In Ref. 2; BAB29226." evidence="11" ref="2">
    <original>V</original>
    <variation>W</variation>
    <location>
        <position position="24"/>
    </location>
</feature>
<feature type="sequence conflict" description="In Ref. 1; AAL50354." evidence="11" ref="1">
    <original>K</original>
    <variation>T</variation>
    <location>
        <position position="179"/>
    </location>
</feature>
<sequence>MIRIASLLLGAALLCAQGAFARRVVSGQKVCFADVKHPCYKMAYFHELSSRVSFQEARLACESEGGVLLSLENEAEQKLIESMLQNLTKPGTGISDGDFWIGLLRSGDGQTSGACPDLYQWSDGSSSQFRNWYTDEPSCGSEKCVVMYHQPTANPGLGGPYLYQWNDDRCNMKHNYICKYEPEIHPTEPAEKPYLTNQPEETHENVVVTEAGIIPNLIYVIIPTIPLLLLILVALGTCCFQMLHKSKGRSKTSPNQSTLWISKSTRKESGMEV</sequence>
<proteinExistence type="evidence at protein level"/>
<name>CHODL_MOUSE</name>
<gene>
    <name type="primary">Chodl</name>
</gene>
<comment type="function">
    <text evidence="1 13">May play a role in the development of the nervous system such as in neurite outgrowth and elongation (PubMed:24067532). May be involved in motor axon growth and guidance (By similarity).</text>
</comment>
<comment type="subunit">
    <text>Interacts with RABGGTB (PubMed:18161010).</text>
</comment>
<comment type="interaction">
    <interactant intactId="EBI-13948582">
        <id>Q9CXM0</id>
    </interactant>
    <interactant intactId="EBI-9104297">
        <id>P53612</id>
        <label>Rabggtb</label>
    </interactant>
    <organismsDiffer>false</organismsDiffer>
    <experiments>2</experiments>
</comment>
<comment type="subcellular location">
    <subcellularLocation>
        <location evidence="11">Membrane</location>
        <topology evidence="11">Single-pass type I membrane protein</topology>
    </subcellularLocation>
</comment>
<comment type="alternative products">
    <event type="alternative splicing"/>
    <isoform>
        <id>Q9CXM0-1</id>
        <name>1</name>
        <name>Chodl-001</name>
        <sequence type="displayed"/>
    </isoform>
    <isoform>
        <id>Q9CXM0-2</id>
        <name>2</name>
        <name>Chodl-002</name>
        <sequence type="described" ref="VSP_058918"/>
    </isoform>
    <text evidence="12">Additional isoforms seem to exist.</text>
</comment>
<comment type="tissue specificity">
    <text evidence="5 6 7">In adult mice preferentially expressed in skeletal muscle, testis, brain, and lung. Expressed in striated muscle (at protein level). Expressed in spinal cord. Detected in spinal cord fast motor neurons (at protein level).</text>
</comment>
<comment type="developmental stage">
    <text evidence="5 7">During gestation (7dpc to 15 dpc) its expression is up-regulated. In 15 dpc embryo is expressed in muscle cells of heterogeneous origin, including those from tongue, trunk, and tail. In newborn mice localized to limb striated muscle cells. Expressed in myoblasts undergoing myogenic differentiation during proliferation and differentiation phases (PubMed:12711387). Expressed in spinal cord motor neurons at 10.5 dpc. Detected in the plexus region of the developing limb bud at 10.5 dpc and 11.5 dpc (PubMed:20437528).</text>
</comment>
<comment type="miscellaneous">
    <text evidence="8">Isoform 1 but not isoform 2 expression is down-regulated at postnatal day (P) 7 in spinal muscular atrophy (SMA) model motor neurons before onset of disease.</text>
</comment>
<comment type="online information" name="Functional Glycomics Gateway - Glycan Binding">
    <link uri="http://www.functionalglycomics.org/glycomics/GBPServlet?&amp;operationType=view&amp;cbpId=cbp_mou_Ctlect_335"/>
    <text>Chondrolectin</text>
</comment>
<keyword id="KW-0025">Alternative splicing</keyword>
<keyword id="KW-1015">Disulfide bond</keyword>
<keyword id="KW-0325">Glycoprotein</keyword>
<keyword id="KW-0430">Lectin</keyword>
<keyword id="KW-0472">Membrane</keyword>
<keyword id="KW-0524">Neurogenesis</keyword>
<keyword id="KW-1185">Reference proteome</keyword>
<keyword id="KW-0732">Signal</keyword>
<keyword id="KW-0812">Transmembrane</keyword>
<keyword id="KW-1133">Transmembrane helix</keyword>
<organism>
    <name type="scientific">Mus musculus</name>
    <name type="common">Mouse</name>
    <dbReference type="NCBI Taxonomy" id="10090"/>
    <lineage>
        <taxon>Eukaryota</taxon>
        <taxon>Metazoa</taxon>
        <taxon>Chordata</taxon>
        <taxon>Craniata</taxon>
        <taxon>Vertebrata</taxon>
        <taxon>Euteleostomi</taxon>
        <taxon>Mammalia</taxon>
        <taxon>Eutheria</taxon>
        <taxon>Euarchontoglires</taxon>
        <taxon>Glires</taxon>
        <taxon>Rodentia</taxon>
        <taxon>Myomorpha</taxon>
        <taxon>Muroidea</taxon>
        <taxon>Muridae</taxon>
        <taxon>Murinae</taxon>
        <taxon>Mus</taxon>
        <taxon>Mus</taxon>
    </lineage>
</organism>
<accession>Q9CXM0</accession>
<accession>Q3US20</accession>
<accession>Q8BVU2</accession>
<accession>Q8VI31</accession>
<reference key="1">
    <citation type="journal article" date="2003" name="Gene">
        <title>Isolation and characterization of chondrolectin (Chodl), a novel C-type lectin predominantly expressed in muscle cells.</title>
        <authorList>
            <person name="Weng L."/>
            <person name="Huebner R."/>
            <person name="Claessens A."/>
            <person name="Smits P."/>
            <person name="Wauters J."/>
            <person name="Tylzanowski P."/>
            <person name="Van Marck E."/>
            <person name="Merregaert J."/>
        </authorList>
    </citation>
    <scope>NUCLEOTIDE SEQUENCE [MRNA] (ISOFORM 1)</scope>
    <scope>TISSUE SPECIFICITY</scope>
    <scope>DEVELOPMENTAL STAGE</scope>
    <source>
        <strain>C57BL/6J</strain>
    </source>
</reference>
<reference key="2">
    <citation type="journal article" date="2005" name="Science">
        <title>The transcriptional landscape of the mammalian genome.</title>
        <authorList>
            <person name="Carninci P."/>
            <person name="Kasukawa T."/>
            <person name="Katayama S."/>
            <person name="Gough J."/>
            <person name="Frith M.C."/>
            <person name="Maeda N."/>
            <person name="Oyama R."/>
            <person name="Ravasi T."/>
            <person name="Lenhard B."/>
            <person name="Wells C."/>
            <person name="Kodzius R."/>
            <person name="Shimokawa K."/>
            <person name="Bajic V.B."/>
            <person name="Brenner S.E."/>
            <person name="Batalov S."/>
            <person name="Forrest A.R."/>
            <person name="Zavolan M."/>
            <person name="Davis M.J."/>
            <person name="Wilming L.G."/>
            <person name="Aidinis V."/>
            <person name="Allen J.E."/>
            <person name="Ambesi-Impiombato A."/>
            <person name="Apweiler R."/>
            <person name="Aturaliya R.N."/>
            <person name="Bailey T.L."/>
            <person name="Bansal M."/>
            <person name="Baxter L."/>
            <person name="Beisel K.W."/>
            <person name="Bersano T."/>
            <person name="Bono H."/>
            <person name="Chalk A.M."/>
            <person name="Chiu K.P."/>
            <person name="Choudhary V."/>
            <person name="Christoffels A."/>
            <person name="Clutterbuck D.R."/>
            <person name="Crowe M.L."/>
            <person name="Dalla E."/>
            <person name="Dalrymple B.P."/>
            <person name="de Bono B."/>
            <person name="Della Gatta G."/>
            <person name="di Bernardo D."/>
            <person name="Down T."/>
            <person name="Engstrom P."/>
            <person name="Fagiolini M."/>
            <person name="Faulkner G."/>
            <person name="Fletcher C.F."/>
            <person name="Fukushima T."/>
            <person name="Furuno M."/>
            <person name="Futaki S."/>
            <person name="Gariboldi M."/>
            <person name="Georgii-Hemming P."/>
            <person name="Gingeras T.R."/>
            <person name="Gojobori T."/>
            <person name="Green R.E."/>
            <person name="Gustincich S."/>
            <person name="Harbers M."/>
            <person name="Hayashi Y."/>
            <person name="Hensch T.K."/>
            <person name="Hirokawa N."/>
            <person name="Hill D."/>
            <person name="Huminiecki L."/>
            <person name="Iacono M."/>
            <person name="Ikeo K."/>
            <person name="Iwama A."/>
            <person name="Ishikawa T."/>
            <person name="Jakt M."/>
            <person name="Kanapin A."/>
            <person name="Katoh M."/>
            <person name="Kawasawa Y."/>
            <person name="Kelso J."/>
            <person name="Kitamura H."/>
            <person name="Kitano H."/>
            <person name="Kollias G."/>
            <person name="Krishnan S.P."/>
            <person name="Kruger A."/>
            <person name="Kummerfeld S.K."/>
            <person name="Kurochkin I.V."/>
            <person name="Lareau L.F."/>
            <person name="Lazarevic D."/>
            <person name="Lipovich L."/>
            <person name="Liu J."/>
            <person name="Liuni S."/>
            <person name="McWilliam S."/>
            <person name="Madan Babu M."/>
            <person name="Madera M."/>
            <person name="Marchionni L."/>
            <person name="Matsuda H."/>
            <person name="Matsuzawa S."/>
            <person name="Miki H."/>
            <person name="Mignone F."/>
            <person name="Miyake S."/>
            <person name="Morris K."/>
            <person name="Mottagui-Tabar S."/>
            <person name="Mulder N."/>
            <person name="Nakano N."/>
            <person name="Nakauchi H."/>
            <person name="Ng P."/>
            <person name="Nilsson R."/>
            <person name="Nishiguchi S."/>
            <person name="Nishikawa S."/>
            <person name="Nori F."/>
            <person name="Ohara O."/>
            <person name="Okazaki Y."/>
            <person name="Orlando V."/>
            <person name="Pang K.C."/>
            <person name="Pavan W.J."/>
            <person name="Pavesi G."/>
            <person name="Pesole G."/>
            <person name="Petrovsky N."/>
            <person name="Piazza S."/>
            <person name="Reed J."/>
            <person name="Reid J.F."/>
            <person name="Ring B.Z."/>
            <person name="Ringwald M."/>
            <person name="Rost B."/>
            <person name="Ruan Y."/>
            <person name="Salzberg S.L."/>
            <person name="Sandelin A."/>
            <person name="Schneider C."/>
            <person name="Schoenbach C."/>
            <person name="Sekiguchi K."/>
            <person name="Semple C.A."/>
            <person name="Seno S."/>
            <person name="Sessa L."/>
            <person name="Sheng Y."/>
            <person name="Shibata Y."/>
            <person name="Shimada H."/>
            <person name="Shimada K."/>
            <person name="Silva D."/>
            <person name="Sinclair B."/>
            <person name="Sperling S."/>
            <person name="Stupka E."/>
            <person name="Sugiura K."/>
            <person name="Sultana R."/>
            <person name="Takenaka Y."/>
            <person name="Taki K."/>
            <person name="Tammoja K."/>
            <person name="Tan S.L."/>
            <person name="Tang S."/>
            <person name="Taylor M.S."/>
            <person name="Tegner J."/>
            <person name="Teichmann S.A."/>
            <person name="Ueda H.R."/>
            <person name="van Nimwegen E."/>
            <person name="Verardo R."/>
            <person name="Wei C.L."/>
            <person name="Yagi K."/>
            <person name="Yamanishi H."/>
            <person name="Zabarovsky E."/>
            <person name="Zhu S."/>
            <person name="Zimmer A."/>
            <person name="Hide W."/>
            <person name="Bult C."/>
            <person name="Grimmond S.M."/>
            <person name="Teasdale R.D."/>
            <person name="Liu E.T."/>
            <person name="Brusic V."/>
            <person name="Quackenbush J."/>
            <person name="Wahlestedt C."/>
            <person name="Mattick J.S."/>
            <person name="Hume D.A."/>
            <person name="Kai C."/>
            <person name="Sasaki D."/>
            <person name="Tomaru Y."/>
            <person name="Fukuda S."/>
            <person name="Kanamori-Katayama M."/>
            <person name="Suzuki M."/>
            <person name="Aoki J."/>
            <person name="Arakawa T."/>
            <person name="Iida J."/>
            <person name="Imamura K."/>
            <person name="Itoh M."/>
            <person name="Kato T."/>
            <person name="Kawaji H."/>
            <person name="Kawagashira N."/>
            <person name="Kawashima T."/>
            <person name="Kojima M."/>
            <person name="Kondo S."/>
            <person name="Konno H."/>
            <person name="Nakano K."/>
            <person name="Ninomiya N."/>
            <person name="Nishio T."/>
            <person name="Okada M."/>
            <person name="Plessy C."/>
            <person name="Shibata K."/>
            <person name="Shiraki T."/>
            <person name="Suzuki S."/>
            <person name="Tagami M."/>
            <person name="Waki K."/>
            <person name="Watahiki A."/>
            <person name="Okamura-Oho Y."/>
            <person name="Suzuki H."/>
            <person name="Kawai J."/>
            <person name="Hayashizaki Y."/>
        </authorList>
    </citation>
    <scope>NUCLEOTIDE SEQUENCE [LARGE SCALE MRNA] (ISOFORMS 1 AND 2)</scope>
    <source>
        <strain>C57BL/6J</strain>
        <tissue>Embryonic head</tissue>
        <tissue>Head</tissue>
    </source>
</reference>
<reference key="3">
    <citation type="journal article" date="2009" name="PLoS Biol.">
        <title>Lineage-specific biology revealed by a finished genome assembly of the mouse.</title>
        <authorList>
            <person name="Church D.M."/>
            <person name="Goodstadt L."/>
            <person name="Hillier L.W."/>
            <person name="Zody M.C."/>
            <person name="Goldstein S."/>
            <person name="She X."/>
            <person name="Bult C.J."/>
            <person name="Agarwala R."/>
            <person name="Cherry J.L."/>
            <person name="DiCuccio M."/>
            <person name="Hlavina W."/>
            <person name="Kapustin Y."/>
            <person name="Meric P."/>
            <person name="Maglott D."/>
            <person name="Birtle Z."/>
            <person name="Marques A.C."/>
            <person name="Graves T."/>
            <person name="Zhou S."/>
            <person name="Teague B."/>
            <person name="Potamousis K."/>
            <person name="Churas C."/>
            <person name="Place M."/>
            <person name="Herschleb J."/>
            <person name="Runnheim R."/>
            <person name="Forrest D."/>
            <person name="Amos-Landgraf J."/>
            <person name="Schwartz D.C."/>
            <person name="Cheng Z."/>
            <person name="Lindblad-Toh K."/>
            <person name="Eichler E.E."/>
            <person name="Ponting C.P."/>
        </authorList>
    </citation>
    <scope>NUCLEOTIDE SEQUENCE [LARGE SCALE GENOMIC DNA]</scope>
    <source>
        <strain>C57BL/6J</strain>
    </source>
</reference>
<reference key="4">
    <citation type="journal article" date="2004" name="Genome Res.">
        <title>The status, quality, and expansion of the NIH full-length cDNA project: the Mammalian Gene Collection (MGC).</title>
        <authorList>
            <consortium name="The MGC Project Team"/>
        </authorList>
    </citation>
    <scope>NUCLEOTIDE SEQUENCE [LARGE SCALE MRNA]</scope>
    <source>
        <tissue>Brain</tissue>
    </source>
</reference>
<reference key="5">
    <citation type="journal article" date="2008" name="Cell. Mol. Biol. Lett.">
        <title>The cytoplasmic domain of chondrolectin interacts with the beta-subunit of Rab geranylgeranyl transferase.</title>
        <authorList>
            <person name="Claessens A."/>
            <person name="Weyn C."/>
            <person name="Merregaert J."/>
        </authorList>
    </citation>
    <scope>INTERACTION WITH RABGGTB</scope>
</reference>
<reference key="6">
    <citation type="journal article" date="2009" name="PLoS Genet.">
        <title>Alternative splicing events are a late feature of pathology in a mouse model of spinal muscular atrophy.</title>
        <authorList>
            <person name="Baeumer D."/>
            <person name="Lee S."/>
            <person name="Nicholson G."/>
            <person name="Davies J.L."/>
            <person name="Parkinson N.J."/>
            <person name="Murray L.M."/>
            <person name="Gillingwater T.H."/>
            <person name="Ansorge O."/>
            <person name="Davies K.E."/>
            <person name="Talbot K."/>
        </authorList>
    </citation>
    <scope>TISSUE SPECIFICITY</scope>
    <scope>ALTERNATIVE SPLICING</scope>
</reference>
<reference key="7">
    <citation type="journal article" date="2010" name="J. Comp. Neurol.">
        <title>Identification of novel spinal cholinergic genetic subtypes disclose Chodl and Pitx2 as markers for fast motor neurons and partition cells.</title>
        <authorList>
            <person name="Enjin A."/>
            <person name="Rabe N."/>
            <person name="Nakanishi S.T."/>
            <person name="Vallstedt A."/>
            <person name="Gezelius H."/>
            <person name="Memic F."/>
            <person name="Lind M."/>
            <person name="Hjalt T."/>
            <person name="Tourtellotte W.G."/>
            <person name="Bruder C."/>
            <person name="Eichele G."/>
            <person name="Whelan P.J."/>
            <person name="Kullander K."/>
        </authorList>
    </citation>
    <scope>TISSUE SPECIFICITY</scope>
    <scope>DEVELOPMENTAL STAGE</scope>
</reference>
<reference key="8">
    <citation type="journal article" date="2014" name="Hum. Mol. Genet.">
        <title>Chondrolectin affects cell survival and neuronal outgrowth in in vitro and in vivo models of spinal muscular atrophy.</title>
        <authorList>
            <person name="Sleigh J.N."/>
            <person name="Barreiro-Iglesias A."/>
            <person name="Oliver P.L."/>
            <person name="Biba A."/>
            <person name="Becker T."/>
            <person name="Davies K.E."/>
            <person name="Becker C.G."/>
            <person name="Talbot K."/>
        </authorList>
    </citation>
    <scope>FUNCTION</scope>
    <scope>POSSIBLE INVOLVEMENT IN SMA</scope>
</reference>
<protein>
    <recommendedName>
        <fullName>Chondrolectin</fullName>
    </recommendedName>
    <alternativeName>
        <fullName>Transmembrane protein MT75</fullName>
    </alternativeName>
</protein>
<dbReference type="EMBL" id="AF311699">
    <property type="protein sequence ID" value="AAL50354.1"/>
    <property type="molecule type" value="mRNA"/>
</dbReference>
<dbReference type="EMBL" id="AK014255">
    <property type="protein sequence ID" value="BAB29226.1"/>
    <property type="molecule type" value="mRNA"/>
</dbReference>
<dbReference type="EMBL" id="AK076523">
    <property type="protein sequence ID" value="BAC36378.1"/>
    <property type="molecule type" value="mRNA"/>
</dbReference>
<dbReference type="EMBL" id="AK140910">
    <property type="protein sequence ID" value="BAE24517.1"/>
    <property type="molecule type" value="mRNA"/>
</dbReference>
<dbReference type="EMBL" id="AC114925">
    <property type="status" value="NOT_ANNOTATED_CDS"/>
    <property type="molecule type" value="Genomic_DNA"/>
</dbReference>
<dbReference type="EMBL" id="AC161815">
    <property type="status" value="NOT_ANNOTATED_CDS"/>
    <property type="molecule type" value="Genomic_DNA"/>
</dbReference>
<dbReference type="EMBL" id="BC117071">
    <property type="protein sequence ID" value="AAI17072.1"/>
    <property type="molecule type" value="mRNA"/>
</dbReference>
<dbReference type="EMBL" id="BC117073">
    <property type="protein sequence ID" value="AAI17074.1"/>
    <property type="molecule type" value="mRNA"/>
</dbReference>
<dbReference type="CCDS" id="CCDS28279.1">
    <molecule id="Q9CXM0-1"/>
</dbReference>
<dbReference type="RefSeq" id="NP_624360.2">
    <molecule id="Q9CXM0-1"/>
    <property type="nucleotide sequence ID" value="NM_139134.5"/>
</dbReference>
<dbReference type="RefSeq" id="XP_006523093.1">
    <molecule id="Q9CXM0-2"/>
    <property type="nucleotide sequence ID" value="XM_006523030.4"/>
</dbReference>
<dbReference type="SMR" id="Q9CXM0"/>
<dbReference type="FunCoup" id="Q9CXM0">
    <property type="interactions" value="520"/>
</dbReference>
<dbReference type="IntAct" id="Q9CXM0">
    <property type="interactions" value="7"/>
</dbReference>
<dbReference type="STRING" id="10090.ENSMUSP00000023568"/>
<dbReference type="GlyCosmos" id="Q9CXM0">
    <property type="glycosylation" value="1 site, No reported glycans"/>
</dbReference>
<dbReference type="GlyGen" id="Q9CXM0">
    <property type="glycosylation" value="1 site, 1 N-linked glycan (1 site)"/>
</dbReference>
<dbReference type="PhosphoSitePlus" id="Q9CXM0"/>
<dbReference type="PaxDb" id="10090-ENSMUSP00000023568"/>
<dbReference type="ProteomicsDB" id="283831">
    <molecule id="Q9CXM0-1"/>
</dbReference>
<dbReference type="ProteomicsDB" id="283832">
    <molecule id="Q9CXM0-2"/>
</dbReference>
<dbReference type="Antibodypedia" id="2518">
    <property type="antibodies" value="133 antibodies from 25 providers"/>
</dbReference>
<dbReference type="DNASU" id="246048"/>
<dbReference type="Ensembl" id="ENSMUST00000023568.14">
    <molecule id="Q9CXM0-1"/>
    <property type="protein sequence ID" value="ENSMUSP00000023568.8"/>
    <property type="gene ID" value="ENSMUSG00000022860.16"/>
</dbReference>
<dbReference type="Ensembl" id="ENSMUST00000069148.13">
    <molecule id="Q9CXM0-2"/>
    <property type="protein sequence ID" value="ENSMUSP00000063961.7"/>
    <property type="gene ID" value="ENSMUSG00000022860.16"/>
</dbReference>
<dbReference type="GeneID" id="246048"/>
<dbReference type="KEGG" id="mmu:246048"/>
<dbReference type="UCSC" id="uc007zsw.1">
    <molecule id="Q9CXM0-1"/>
    <property type="organism name" value="mouse"/>
</dbReference>
<dbReference type="AGR" id="MGI:2179069"/>
<dbReference type="CTD" id="140578"/>
<dbReference type="MGI" id="MGI:2179069">
    <property type="gene designation" value="Chodl"/>
</dbReference>
<dbReference type="VEuPathDB" id="HostDB:ENSMUSG00000022860"/>
<dbReference type="eggNOG" id="KOG4297">
    <property type="taxonomic scope" value="Eukaryota"/>
</dbReference>
<dbReference type="GeneTree" id="ENSGT00390000001844"/>
<dbReference type="InParanoid" id="Q9CXM0"/>
<dbReference type="OMA" id="FICKYKS"/>
<dbReference type="OrthoDB" id="44222at9989"/>
<dbReference type="TreeFam" id="TF330715"/>
<dbReference type="BioGRID-ORCS" id="246048">
    <property type="hits" value="3 hits in 76 CRISPR screens"/>
</dbReference>
<dbReference type="ChiTaRS" id="Chodl">
    <property type="organism name" value="mouse"/>
</dbReference>
<dbReference type="PRO" id="PR:Q9CXM0"/>
<dbReference type="Proteomes" id="UP000000589">
    <property type="component" value="Chromosome 16"/>
</dbReference>
<dbReference type="RNAct" id="Q9CXM0">
    <property type="molecule type" value="protein"/>
</dbReference>
<dbReference type="Bgee" id="ENSMUSG00000022860">
    <property type="expression patterns" value="Expressed in facial nucleus and 173 other cell types or tissues"/>
</dbReference>
<dbReference type="ExpressionAtlas" id="Q9CXM0">
    <property type="expression patterns" value="baseline and differential"/>
</dbReference>
<dbReference type="GO" id="GO:0005813">
    <property type="term" value="C:centrosome"/>
    <property type="evidence" value="ECO:0007669"/>
    <property type="project" value="Ensembl"/>
</dbReference>
<dbReference type="GO" id="GO:0005829">
    <property type="term" value="C:cytosol"/>
    <property type="evidence" value="ECO:0007669"/>
    <property type="project" value="Ensembl"/>
</dbReference>
<dbReference type="GO" id="GO:0016020">
    <property type="term" value="C:membrane"/>
    <property type="evidence" value="ECO:0007669"/>
    <property type="project" value="UniProtKB-SubCell"/>
</dbReference>
<dbReference type="GO" id="GO:0048471">
    <property type="term" value="C:perinuclear region of cytoplasm"/>
    <property type="evidence" value="ECO:0000250"/>
    <property type="project" value="HGNC-UCL"/>
</dbReference>
<dbReference type="GO" id="GO:0030246">
    <property type="term" value="F:carbohydrate binding"/>
    <property type="evidence" value="ECO:0007669"/>
    <property type="project" value="UniProtKB-KW"/>
</dbReference>
<dbReference type="GO" id="GO:0007399">
    <property type="term" value="P:nervous system development"/>
    <property type="evidence" value="ECO:0007669"/>
    <property type="project" value="UniProtKB-KW"/>
</dbReference>
<dbReference type="GO" id="GO:0010975">
    <property type="term" value="P:regulation of neuron projection development"/>
    <property type="evidence" value="ECO:0000316"/>
    <property type="project" value="MGI"/>
</dbReference>
<dbReference type="FunFam" id="3.10.100.10:FF:000006">
    <property type="entry name" value="Layilin b"/>
    <property type="match status" value="1"/>
</dbReference>
<dbReference type="Gene3D" id="3.10.100.10">
    <property type="entry name" value="Mannose-Binding Protein A, subunit A"/>
    <property type="match status" value="1"/>
</dbReference>
<dbReference type="InterPro" id="IPR001304">
    <property type="entry name" value="C-type_lectin-like"/>
</dbReference>
<dbReference type="InterPro" id="IPR016186">
    <property type="entry name" value="C-type_lectin-like/link_sf"/>
</dbReference>
<dbReference type="InterPro" id="IPR051505">
    <property type="entry name" value="C-type_lectin_domain"/>
</dbReference>
<dbReference type="InterPro" id="IPR016187">
    <property type="entry name" value="CTDL_fold"/>
</dbReference>
<dbReference type="PANTHER" id="PTHR14789">
    <property type="entry name" value="CHONDROLECTIN VARIANT CHODLFDELTAE"/>
    <property type="match status" value="1"/>
</dbReference>
<dbReference type="Pfam" id="PF00059">
    <property type="entry name" value="Lectin_C"/>
    <property type="match status" value="1"/>
</dbReference>
<dbReference type="SMART" id="SM00034">
    <property type="entry name" value="CLECT"/>
    <property type="match status" value="1"/>
</dbReference>
<dbReference type="SUPFAM" id="SSF56436">
    <property type="entry name" value="C-type lectin-like"/>
    <property type="match status" value="1"/>
</dbReference>
<dbReference type="PROSITE" id="PS50041">
    <property type="entry name" value="C_TYPE_LECTIN_2"/>
    <property type="match status" value="1"/>
</dbReference>
<evidence type="ECO:0000250" key="1">
    <source>
        <dbReference type="UniProtKB" id="Q568T5"/>
    </source>
</evidence>
<evidence type="ECO:0000255" key="2"/>
<evidence type="ECO:0000255" key="3">
    <source>
        <dbReference type="PROSITE-ProRule" id="PRU00040"/>
    </source>
</evidence>
<evidence type="ECO:0000256" key="4">
    <source>
        <dbReference type="SAM" id="MobiDB-lite"/>
    </source>
</evidence>
<evidence type="ECO:0000269" key="5">
    <source>
    </source>
</evidence>
<evidence type="ECO:0000269" key="6">
    <source>
    </source>
</evidence>
<evidence type="ECO:0000269" key="7">
    <source>
    </source>
</evidence>
<evidence type="ECO:0000269" key="8">
    <source>
    </source>
</evidence>
<evidence type="ECO:0000303" key="9">
    <source>
    </source>
</evidence>
<evidence type="ECO:0000303" key="10">
    <source>
    </source>
</evidence>
<evidence type="ECO:0000305" key="11"/>
<evidence type="ECO:0000305" key="12">
    <source>
    </source>
</evidence>
<evidence type="ECO:0000305" key="13">
    <source>
    </source>
</evidence>